<proteinExistence type="evidence at transcript level"/>
<keyword id="KW-0256">Endoplasmic reticulum</keyword>
<keyword id="KW-0472">Membrane</keyword>
<keyword id="KW-0479">Metal-binding</keyword>
<keyword id="KW-1185">Reference proteome</keyword>
<keyword id="KW-0808">Transferase</keyword>
<keyword id="KW-0812">Transmembrane</keyword>
<keyword id="KW-1133">Transmembrane helix</keyword>
<keyword id="KW-0862">Zinc</keyword>
<keyword id="KW-0863">Zinc-finger</keyword>
<evidence type="ECO:0000250" key="1">
    <source>
        <dbReference type="UniProtKB" id="Q09251"/>
    </source>
</evidence>
<evidence type="ECO:0000255" key="2"/>
<evidence type="ECO:0000255" key="3">
    <source>
        <dbReference type="PROSITE-ProRule" id="PRU00175"/>
    </source>
</evidence>
<evidence type="ECO:0000305" key="4"/>
<gene>
    <name type="primary">rnf121</name>
</gene>
<comment type="function">
    <text evidence="1">E3 ubiquitin ligase which accepts ubiquitin and transfers it to substrates thereby promoting their degradation by the endoplasmic reticulum-associated degradation (ERAD) pathway which is a pathway involved in ubiquitin-dependent degradation of misfolded endoplasmic reticulum proteins (By similarity). May regulate the unfolded protein response to reduce endoplasmic reticulum stress (By similarity).</text>
</comment>
<comment type="catalytic activity">
    <reaction evidence="1">
        <text>S-ubiquitinyl-[E2 ubiquitin-conjugating enzyme]-L-cysteine + [acceptor protein]-L-lysine = [E2 ubiquitin-conjugating enzyme]-L-cysteine + N(6)-ubiquitinyl-[acceptor protein]-L-lysine.</text>
        <dbReference type="EC" id="2.3.2.27"/>
    </reaction>
</comment>
<comment type="pathway">
    <text evidence="1">Protein modification; protein ubiquitination.</text>
</comment>
<comment type="subcellular location">
    <subcellularLocation>
        <location evidence="1">Endoplasmic reticulum membrane</location>
        <topology evidence="4">Multi-pass membrane protein</topology>
    </subcellularLocation>
</comment>
<comment type="similarity">
    <text evidence="4">Belongs to the RNF121 family.</text>
</comment>
<sequence>MAAVLEVEIGGEAVREAAGEEVDLSELAPEERWRVEHARMHAKHRGHEAMHAEMVLILIATLVVAQLLLVQWKQRHQRSYNMVTLFQMWIVPVYFTVKLHWWRFLGIWFLFSIVTAFVTYKATRKPLVQTTPRLVYKWFLLLYKMSYATGIVGYIAVMFTLFGLNLLFRIKPEDAMDFGISLLFYGLYYGVLGRDFAEMCADYMASTIGFYSASGMPTKHLSDSVCAVCGQQIFVDVNEEGIIENTYRLSCNHVFHEFCIRGWCIVGKKQTCPYCKEKVDLKRMFSNPWERPHVMYGQLLDWLRYLVAWQPVIIGLVQGINYCLGLE</sequence>
<organism>
    <name type="scientific">Xenopus tropicalis</name>
    <name type="common">Western clawed frog</name>
    <name type="synonym">Silurana tropicalis</name>
    <dbReference type="NCBI Taxonomy" id="8364"/>
    <lineage>
        <taxon>Eukaryota</taxon>
        <taxon>Metazoa</taxon>
        <taxon>Chordata</taxon>
        <taxon>Craniata</taxon>
        <taxon>Vertebrata</taxon>
        <taxon>Euteleostomi</taxon>
        <taxon>Amphibia</taxon>
        <taxon>Batrachia</taxon>
        <taxon>Anura</taxon>
        <taxon>Pipoidea</taxon>
        <taxon>Pipidae</taxon>
        <taxon>Xenopodinae</taxon>
        <taxon>Xenopus</taxon>
        <taxon>Silurana</taxon>
    </lineage>
</organism>
<accession>Q6P360</accession>
<protein>
    <recommendedName>
        <fullName evidence="4">E3 ubiquitin ligase Rnf121</fullName>
        <ecNumber evidence="1">2.3.2.27</ecNumber>
    </recommendedName>
    <alternativeName>
        <fullName>RING finger protein 121</fullName>
    </alternativeName>
</protein>
<reference key="1">
    <citation type="submission" date="2003-12" db="EMBL/GenBank/DDBJ databases">
        <authorList>
            <consortium name="NIH - Xenopus Gene Collection (XGC) project"/>
        </authorList>
    </citation>
    <scope>NUCLEOTIDE SEQUENCE [LARGE SCALE MRNA]</scope>
    <source>
        <tissue>Embryo</tissue>
    </source>
</reference>
<dbReference type="EC" id="2.3.2.27" evidence="1"/>
<dbReference type="EMBL" id="BC064173">
    <property type="protein sequence ID" value="AAH64173.1"/>
    <property type="molecule type" value="mRNA"/>
</dbReference>
<dbReference type="RefSeq" id="NP_989290.1">
    <property type="nucleotide sequence ID" value="NM_203959.1"/>
</dbReference>
<dbReference type="FunCoup" id="Q6P360">
    <property type="interactions" value="1392"/>
</dbReference>
<dbReference type="STRING" id="8364.ENSXETP00000019010"/>
<dbReference type="PaxDb" id="8364-ENSXETP00000051634"/>
<dbReference type="DNASU" id="394908"/>
<dbReference type="GeneID" id="394908"/>
<dbReference type="KEGG" id="xtr:394908"/>
<dbReference type="AGR" id="Xenbase:XB-GENE-5888698"/>
<dbReference type="CTD" id="55298"/>
<dbReference type="Xenbase" id="XB-GENE-5888698">
    <property type="gene designation" value="rnf121"/>
</dbReference>
<dbReference type="eggNOG" id="KOG1734">
    <property type="taxonomic scope" value="Eukaryota"/>
</dbReference>
<dbReference type="HOGENOM" id="CLU_055016_1_0_1"/>
<dbReference type="InParanoid" id="Q6P360"/>
<dbReference type="OMA" id="ICADKIA"/>
<dbReference type="OrthoDB" id="446635at2759"/>
<dbReference type="PhylomeDB" id="Q6P360"/>
<dbReference type="TreeFam" id="TF314357"/>
<dbReference type="UniPathway" id="UPA00143"/>
<dbReference type="Proteomes" id="UP000008143">
    <property type="component" value="Chromosome 6"/>
</dbReference>
<dbReference type="Bgee" id="ENSXETG00000023935">
    <property type="expression patterns" value="Expressed in neurula embryo and 14 other cell types or tissues"/>
</dbReference>
<dbReference type="GO" id="GO:0005789">
    <property type="term" value="C:endoplasmic reticulum membrane"/>
    <property type="evidence" value="ECO:0007669"/>
    <property type="project" value="UniProtKB-SubCell"/>
</dbReference>
<dbReference type="GO" id="GO:0016740">
    <property type="term" value="F:transferase activity"/>
    <property type="evidence" value="ECO:0007669"/>
    <property type="project" value="UniProtKB-KW"/>
</dbReference>
<dbReference type="GO" id="GO:0008270">
    <property type="term" value="F:zinc ion binding"/>
    <property type="evidence" value="ECO:0007669"/>
    <property type="project" value="UniProtKB-KW"/>
</dbReference>
<dbReference type="GO" id="GO:0016567">
    <property type="term" value="P:protein ubiquitination"/>
    <property type="evidence" value="ECO:0007669"/>
    <property type="project" value="UniProtKB-UniPathway"/>
</dbReference>
<dbReference type="CDD" id="cd16475">
    <property type="entry name" value="RING-H2_RNF121-like"/>
    <property type="match status" value="1"/>
</dbReference>
<dbReference type="FunFam" id="3.30.40.10:FF:000074">
    <property type="entry name" value="Ring finger protein 121"/>
    <property type="match status" value="1"/>
</dbReference>
<dbReference type="Gene3D" id="3.30.40.10">
    <property type="entry name" value="Zinc/RING finger domain, C3HC4 (zinc finger)"/>
    <property type="match status" value="1"/>
</dbReference>
<dbReference type="InterPro" id="IPR040176">
    <property type="entry name" value="RNF121/RNF175"/>
</dbReference>
<dbReference type="InterPro" id="IPR001841">
    <property type="entry name" value="Znf_RING"/>
</dbReference>
<dbReference type="InterPro" id="IPR013083">
    <property type="entry name" value="Znf_RING/FYVE/PHD"/>
</dbReference>
<dbReference type="PANTHER" id="PTHR13407:SF1">
    <property type="entry name" value="E3 UBIQUITIN LIGASE RNF121"/>
    <property type="match status" value="1"/>
</dbReference>
<dbReference type="PANTHER" id="PTHR13407">
    <property type="entry name" value="RNF121 PROTEIN"/>
    <property type="match status" value="1"/>
</dbReference>
<dbReference type="SMART" id="SM00184">
    <property type="entry name" value="RING"/>
    <property type="match status" value="1"/>
</dbReference>
<dbReference type="SUPFAM" id="SSF57850">
    <property type="entry name" value="RING/U-box"/>
    <property type="match status" value="1"/>
</dbReference>
<dbReference type="PROSITE" id="PS50089">
    <property type="entry name" value="ZF_RING_2"/>
    <property type="match status" value="1"/>
</dbReference>
<feature type="chain" id="PRO_0000261410" description="E3 ubiquitin ligase Rnf121">
    <location>
        <begin position="1"/>
        <end position="327"/>
    </location>
</feature>
<feature type="transmembrane region" description="Helical" evidence="2">
    <location>
        <begin position="50"/>
        <end position="70"/>
    </location>
</feature>
<feature type="transmembrane region" description="Helical" evidence="2">
    <location>
        <begin position="79"/>
        <end position="96"/>
    </location>
</feature>
<feature type="transmembrane region" description="Helical" evidence="2">
    <location>
        <begin position="99"/>
        <end position="119"/>
    </location>
</feature>
<feature type="transmembrane region" description="Helical" evidence="2">
    <location>
        <begin position="148"/>
        <end position="168"/>
    </location>
</feature>
<feature type="transmembrane region" description="Helical" evidence="2">
    <location>
        <begin position="173"/>
        <end position="193"/>
    </location>
</feature>
<feature type="zinc finger region" description="RING-type; atypical" evidence="3">
    <location>
        <begin position="226"/>
        <end position="276"/>
    </location>
</feature>
<name>RN121_XENTR</name>